<evidence type="ECO:0000255" key="1"/>
<evidence type="ECO:0000305" key="2"/>
<dbReference type="EC" id="1.-.-.-"/>
<dbReference type="EMBL" id="X71133">
    <property type="protein sequence ID" value="CAA50450.1"/>
    <property type="molecule type" value="Genomic_DNA"/>
</dbReference>
<dbReference type="EMBL" id="Z28107">
    <property type="protein sequence ID" value="CAA81947.1"/>
    <property type="molecule type" value="Genomic_DNA"/>
</dbReference>
<dbReference type="EMBL" id="BK006944">
    <property type="protein sequence ID" value="DAA09050.1"/>
    <property type="molecule type" value="Genomic_DNA"/>
</dbReference>
<dbReference type="PIR" id="S37934">
    <property type="entry name" value="S37934"/>
</dbReference>
<dbReference type="RefSeq" id="NP_012815.1">
    <property type="nucleotide sequence ID" value="NM_001179673.1"/>
</dbReference>
<dbReference type="SMR" id="P34251"/>
<dbReference type="BioGRID" id="34026">
    <property type="interactions" value="25"/>
</dbReference>
<dbReference type="DIP" id="DIP-4754N"/>
<dbReference type="FunCoup" id="P34251">
    <property type="interactions" value="60"/>
</dbReference>
<dbReference type="STRING" id="4932.YKL107W"/>
<dbReference type="iPTMnet" id="P34251"/>
<dbReference type="PaxDb" id="4932-YKL107W"/>
<dbReference type="PeptideAtlas" id="P34251"/>
<dbReference type="EnsemblFungi" id="YKL107W_mRNA">
    <property type="protein sequence ID" value="YKL107W"/>
    <property type="gene ID" value="YKL107W"/>
</dbReference>
<dbReference type="GeneID" id="853753"/>
<dbReference type="KEGG" id="sce:YKL107W"/>
<dbReference type="AGR" id="SGD:S000001590"/>
<dbReference type="SGD" id="S000001590">
    <property type="gene designation" value="YKL107W"/>
</dbReference>
<dbReference type="VEuPathDB" id="FungiDB:YKL107W"/>
<dbReference type="eggNOG" id="KOG1208">
    <property type="taxonomic scope" value="Eukaryota"/>
</dbReference>
<dbReference type="HOGENOM" id="CLU_082210_0_0_1"/>
<dbReference type="InParanoid" id="P34251"/>
<dbReference type="OMA" id="AHMNTVA"/>
<dbReference type="OrthoDB" id="2898509at2759"/>
<dbReference type="BioCyc" id="YEAST:G3O-31893-MONOMER"/>
<dbReference type="Reactome" id="R-SCE-5365859">
    <property type="pathway name" value="RA biosynthesis pathway"/>
</dbReference>
<dbReference type="BioGRID-ORCS" id="853753">
    <property type="hits" value="0 hits in 10 CRISPR screens"/>
</dbReference>
<dbReference type="PRO" id="PR:P34251"/>
<dbReference type="Proteomes" id="UP000002311">
    <property type="component" value="Chromosome XI"/>
</dbReference>
<dbReference type="RNAct" id="P34251">
    <property type="molecule type" value="protein"/>
</dbReference>
<dbReference type="GO" id="GO:0005783">
    <property type="term" value="C:endoplasmic reticulum"/>
    <property type="evidence" value="ECO:0000314"/>
    <property type="project" value="SGD"/>
</dbReference>
<dbReference type="GO" id="GO:0016020">
    <property type="term" value="C:membrane"/>
    <property type="evidence" value="ECO:0007669"/>
    <property type="project" value="UniProtKB-SubCell"/>
</dbReference>
<dbReference type="GO" id="GO:0004029">
    <property type="term" value="F:aldehyde dehydrogenase (NAD+) activity"/>
    <property type="evidence" value="ECO:0000314"/>
    <property type="project" value="SGD"/>
</dbReference>
<dbReference type="GO" id="GO:1901426">
    <property type="term" value="P:response to furfural"/>
    <property type="evidence" value="ECO:0000315"/>
    <property type="project" value="SGD"/>
</dbReference>
<dbReference type="Gene3D" id="3.40.50.720">
    <property type="entry name" value="NAD(P)-binding Rossmann-like Domain"/>
    <property type="match status" value="1"/>
</dbReference>
<dbReference type="InterPro" id="IPR036291">
    <property type="entry name" value="NAD(P)-bd_dom_sf"/>
</dbReference>
<dbReference type="InterPro" id="IPR002347">
    <property type="entry name" value="SDR_fam"/>
</dbReference>
<dbReference type="InterPro" id="IPR052228">
    <property type="entry name" value="Sec_Metab_Biosynth_Oxidored"/>
</dbReference>
<dbReference type="PANTHER" id="PTHR47534:SF3">
    <property type="entry name" value="ALCOHOL DEHYDROGENASE-LIKE C-TERMINAL DOMAIN-CONTAINING PROTEIN"/>
    <property type="match status" value="1"/>
</dbReference>
<dbReference type="PANTHER" id="PTHR47534">
    <property type="entry name" value="YALI0E05731P"/>
    <property type="match status" value="1"/>
</dbReference>
<dbReference type="Pfam" id="PF00106">
    <property type="entry name" value="adh_short"/>
    <property type="match status" value="1"/>
</dbReference>
<dbReference type="SUPFAM" id="SSF51735">
    <property type="entry name" value="NAD(P)-binding Rossmann-fold domains"/>
    <property type="match status" value="1"/>
</dbReference>
<gene>
    <name type="ordered locus">YKL107W</name>
    <name type="ORF">YKL462</name>
</gene>
<sequence>MFWKKDPTVSWERKNINDIDFSRFNVAIIGGTGGLGRAISRELAQRNARVTVVGQTFRDEDLKDKINFVKADLSLVSECKRISHSDEIPYEELTHLIFTTGIFASRQRQATSEGLEKDMAVSYLSRYIIFHDVAKRLGISRTKKDDLPKVFIAGFPGNGQVGDPDDLNSDEKKYSAYATHMNTVAANESLVIDAKDRYTNIDTFGLNPGLIKTNIRNNLLGSDTYLSRITEWIISWTCQSAETYAKTICTLIASPAIESRSGTMFSNKGDAILPSPGLTKDVVEKFMENSELLVEKALRNQSPFTSSNE</sequence>
<comment type="subcellular location">
    <subcellularLocation>
        <location evidence="2">Membrane</location>
        <topology evidence="2">Single-pass membrane protein</topology>
    </subcellularLocation>
</comment>
<comment type="similarity">
    <text evidence="2">Belongs to the NmrA-type oxidoreductase family.</text>
</comment>
<proteinExistence type="inferred from homology"/>
<accession>P34251</accession>
<accession>D6VXI0</accession>
<protein>
    <recommendedName>
        <fullName>Uncharacterized oxidoreductase YKL107W</fullName>
        <ecNumber>1.-.-.-</ecNumber>
    </recommendedName>
</protein>
<organism>
    <name type="scientific">Saccharomyces cerevisiae (strain ATCC 204508 / S288c)</name>
    <name type="common">Baker's yeast</name>
    <dbReference type="NCBI Taxonomy" id="559292"/>
    <lineage>
        <taxon>Eukaryota</taxon>
        <taxon>Fungi</taxon>
        <taxon>Dikarya</taxon>
        <taxon>Ascomycota</taxon>
        <taxon>Saccharomycotina</taxon>
        <taxon>Saccharomycetes</taxon>
        <taxon>Saccharomycetales</taxon>
        <taxon>Saccharomycetaceae</taxon>
        <taxon>Saccharomyces</taxon>
    </lineage>
</organism>
<keyword id="KW-0472">Membrane</keyword>
<keyword id="KW-0560">Oxidoreductase</keyword>
<keyword id="KW-1185">Reference proteome</keyword>
<keyword id="KW-0812">Transmembrane</keyword>
<keyword id="KW-1133">Transmembrane helix</keyword>
<name>YKK7_YEAST</name>
<reference key="1">
    <citation type="journal article" date="1993" name="Yeast">
        <title>The DNA sequence analysis of the HAP4-LAP4 region on chromosome XI of Saccharomyces cerevisiae suggests the presence of a second aspartate aminotransferase gene in yeast.</title>
        <authorList>
            <person name="Cheret G."/>
            <person name="Pallier C."/>
            <person name="Valens M."/>
            <person name="Daignan-Fornier B."/>
            <person name="Fukuhara H."/>
            <person name="Bolotin-Fukuhara M."/>
            <person name="Sor F."/>
        </authorList>
    </citation>
    <scope>NUCLEOTIDE SEQUENCE [GENOMIC DNA]</scope>
    <source>
        <strain>ATCC 204508 / S288c</strain>
    </source>
</reference>
<reference key="2">
    <citation type="journal article" date="1994" name="Nature">
        <title>Complete DNA sequence of yeast chromosome XI.</title>
        <authorList>
            <person name="Dujon B."/>
            <person name="Alexandraki D."/>
            <person name="Andre B."/>
            <person name="Ansorge W."/>
            <person name="Baladron V."/>
            <person name="Ballesta J.P.G."/>
            <person name="Banrevi A."/>
            <person name="Bolle P.-A."/>
            <person name="Bolotin-Fukuhara M."/>
            <person name="Bossier P."/>
            <person name="Bou G."/>
            <person name="Boyer J."/>
            <person name="Buitrago M.J."/>
            <person name="Cheret G."/>
            <person name="Colleaux L."/>
            <person name="Daignan-Fornier B."/>
            <person name="del Rey F."/>
            <person name="Dion C."/>
            <person name="Domdey H."/>
            <person name="Duesterhoeft A."/>
            <person name="Duesterhus S."/>
            <person name="Entian K.-D."/>
            <person name="Erfle H."/>
            <person name="Esteban P.F."/>
            <person name="Feldmann H."/>
            <person name="Fernandes L."/>
            <person name="Fobo G.M."/>
            <person name="Fritz C."/>
            <person name="Fukuhara H."/>
            <person name="Gabel C."/>
            <person name="Gaillon L."/>
            <person name="Garcia-Cantalejo J.M."/>
            <person name="Garcia-Ramirez J.J."/>
            <person name="Gent M.E."/>
            <person name="Ghazvini M."/>
            <person name="Goffeau A."/>
            <person name="Gonzalez A."/>
            <person name="Grothues D."/>
            <person name="Guerreiro P."/>
            <person name="Hegemann J.H."/>
            <person name="Hewitt N."/>
            <person name="Hilger F."/>
            <person name="Hollenberg C.P."/>
            <person name="Horaitis O."/>
            <person name="Indge K.J."/>
            <person name="Jacquier A."/>
            <person name="James C.M."/>
            <person name="Jauniaux J.-C."/>
            <person name="Jimenez A."/>
            <person name="Keuchel H."/>
            <person name="Kirchrath L."/>
            <person name="Kleine K."/>
            <person name="Koetter P."/>
            <person name="Legrain P."/>
            <person name="Liebl S."/>
            <person name="Louis E.J."/>
            <person name="Maia e Silva A."/>
            <person name="Marck C."/>
            <person name="Monnier A.-L."/>
            <person name="Moestl D."/>
            <person name="Mueller S."/>
            <person name="Obermaier B."/>
            <person name="Oliver S.G."/>
            <person name="Pallier C."/>
            <person name="Pascolo S."/>
            <person name="Pfeiffer F."/>
            <person name="Philippsen P."/>
            <person name="Planta R.J."/>
            <person name="Pohl F.M."/>
            <person name="Pohl T.M."/>
            <person name="Poehlmann R."/>
            <person name="Portetelle D."/>
            <person name="Purnelle B."/>
            <person name="Puzos V."/>
            <person name="Ramezani Rad M."/>
            <person name="Rasmussen S.W."/>
            <person name="Remacha M.A."/>
            <person name="Revuelta J.L."/>
            <person name="Richard G.-F."/>
            <person name="Rieger M."/>
            <person name="Rodrigues-Pousada C."/>
            <person name="Rose M."/>
            <person name="Rupp T."/>
            <person name="Santos M.A."/>
            <person name="Schwager C."/>
            <person name="Sensen C."/>
            <person name="Skala J."/>
            <person name="Soares H."/>
            <person name="Sor F."/>
            <person name="Stegemann J."/>
            <person name="Tettelin H."/>
            <person name="Thierry A."/>
            <person name="Tzermia M."/>
            <person name="Urrestarazu L.A."/>
            <person name="van Dyck L."/>
            <person name="van Vliet-Reedijk J.C."/>
            <person name="Valens M."/>
            <person name="Vandenbol M."/>
            <person name="Vilela C."/>
            <person name="Vissers S."/>
            <person name="von Wettstein D."/>
            <person name="Voss H."/>
            <person name="Wiemann S."/>
            <person name="Xu G."/>
            <person name="Zimmermann J."/>
            <person name="Haasemann M."/>
            <person name="Becker I."/>
            <person name="Mewes H.-W."/>
        </authorList>
    </citation>
    <scope>NUCLEOTIDE SEQUENCE [LARGE SCALE GENOMIC DNA]</scope>
    <source>
        <strain>ATCC 204508 / S288c</strain>
    </source>
</reference>
<reference key="3">
    <citation type="journal article" date="2014" name="G3 (Bethesda)">
        <title>The reference genome sequence of Saccharomyces cerevisiae: Then and now.</title>
        <authorList>
            <person name="Engel S.R."/>
            <person name="Dietrich F.S."/>
            <person name="Fisk D.G."/>
            <person name="Binkley G."/>
            <person name="Balakrishnan R."/>
            <person name="Costanzo M.C."/>
            <person name="Dwight S.S."/>
            <person name="Hitz B.C."/>
            <person name="Karra K."/>
            <person name="Nash R.S."/>
            <person name="Weng S."/>
            <person name="Wong E.D."/>
            <person name="Lloyd P."/>
            <person name="Skrzypek M.S."/>
            <person name="Miyasato S.R."/>
            <person name="Simison M."/>
            <person name="Cherry J.M."/>
        </authorList>
    </citation>
    <scope>GENOME REANNOTATION</scope>
    <source>
        <strain>ATCC 204508 / S288c</strain>
    </source>
</reference>
<feature type="chain" id="PRO_0000203158" description="Uncharacterized oxidoreductase YKL107W">
    <location>
        <begin position="1"/>
        <end position="309"/>
    </location>
</feature>
<feature type="transmembrane region" description="Helical" evidence="1">
    <location>
        <begin position="23"/>
        <end position="39"/>
    </location>
</feature>